<organism>
    <name type="scientific">Picrophilus torridus (strain ATCC 700027 / DSM 9790 / JCM 10055 / NBRC 100828 / KAW 2/3)</name>
    <dbReference type="NCBI Taxonomy" id="1122961"/>
    <lineage>
        <taxon>Archaea</taxon>
        <taxon>Methanobacteriati</taxon>
        <taxon>Thermoplasmatota</taxon>
        <taxon>Thermoplasmata</taxon>
        <taxon>Thermoplasmatales</taxon>
        <taxon>Picrophilaceae</taxon>
        <taxon>Picrophilus</taxon>
    </lineage>
</organism>
<evidence type="ECO:0000255" key="1">
    <source>
        <dbReference type="HAMAP-Rule" id="MF_00241"/>
    </source>
</evidence>
<proteinExistence type="inferred from homology"/>
<accession>Q6L1T6</accession>
<name>OGG1_PICTO</name>
<comment type="function">
    <text evidence="1">Catalyzes the excision of an oxidatively damaged form of guanine (7,8-dihydro-8-oxoguanine = 8-oxoG) from DNA. Also cleaves the DNA backbone at apurinic/apyrimidinic sites (AP sites).</text>
</comment>
<comment type="catalytic activity">
    <reaction evidence="1">
        <text>2'-deoxyribonucleotide-(2'-deoxyribose 5'-phosphate)-2'-deoxyribonucleotide-DNA = a 3'-end 2'-deoxyribonucleotide-(2,3-dehydro-2,3-deoxyribose 5'-phosphate)-DNA + a 5'-end 5'-phospho-2'-deoxyribonucleoside-DNA + H(+)</text>
        <dbReference type="Rhea" id="RHEA:66592"/>
        <dbReference type="Rhea" id="RHEA-COMP:13180"/>
        <dbReference type="Rhea" id="RHEA-COMP:16897"/>
        <dbReference type="Rhea" id="RHEA-COMP:17067"/>
        <dbReference type="ChEBI" id="CHEBI:15378"/>
        <dbReference type="ChEBI" id="CHEBI:136412"/>
        <dbReference type="ChEBI" id="CHEBI:157695"/>
        <dbReference type="ChEBI" id="CHEBI:167181"/>
        <dbReference type="EC" id="4.2.99.18"/>
    </reaction>
</comment>
<comment type="similarity">
    <text evidence="1">Belongs to the type-2 OGG1 family.</text>
</comment>
<dbReference type="EC" id="3.2.2.-" evidence="1"/>
<dbReference type="EC" id="4.2.99.18" evidence="1"/>
<dbReference type="EMBL" id="AE017261">
    <property type="protein sequence ID" value="AAT43066.1"/>
    <property type="molecule type" value="Genomic_DNA"/>
</dbReference>
<dbReference type="RefSeq" id="WP_011177282.1">
    <property type="nucleotide sequence ID" value="NC_005877.1"/>
</dbReference>
<dbReference type="SMR" id="Q6L1T6"/>
<dbReference type="STRING" id="263820.PTO0481"/>
<dbReference type="PaxDb" id="263820-PTO0481"/>
<dbReference type="GeneID" id="2844848"/>
<dbReference type="KEGG" id="pto:PTO0481"/>
<dbReference type="eggNOG" id="arCOG04357">
    <property type="taxonomic scope" value="Archaea"/>
</dbReference>
<dbReference type="HOGENOM" id="CLU_104937_0_0_2"/>
<dbReference type="InParanoid" id="Q6L1T6"/>
<dbReference type="OrthoDB" id="35941at2157"/>
<dbReference type="Proteomes" id="UP000000438">
    <property type="component" value="Chromosome"/>
</dbReference>
<dbReference type="GO" id="GO:0140078">
    <property type="term" value="F:class I DNA-(apurinic or apyrimidinic site) endonuclease activity"/>
    <property type="evidence" value="ECO:0007669"/>
    <property type="project" value="UniProtKB-EC"/>
</dbReference>
<dbReference type="GO" id="GO:0016799">
    <property type="term" value="F:hydrolase activity, hydrolyzing N-glycosyl compounds"/>
    <property type="evidence" value="ECO:0007669"/>
    <property type="project" value="UniProtKB-UniRule"/>
</dbReference>
<dbReference type="GO" id="GO:0006284">
    <property type="term" value="P:base-excision repair"/>
    <property type="evidence" value="ECO:0007669"/>
    <property type="project" value="UniProtKB-UniRule"/>
</dbReference>
<dbReference type="CDD" id="cd00056">
    <property type="entry name" value="ENDO3c"/>
    <property type="match status" value="1"/>
</dbReference>
<dbReference type="Gene3D" id="1.10.1670.10">
    <property type="entry name" value="Helix-hairpin-Helix base-excision DNA repair enzymes (C-terminal)"/>
    <property type="match status" value="1"/>
</dbReference>
<dbReference type="Gene3D" id="1.10.340.30">
    <property type="entry name" value="Hypothetical protein, domain 2"/>
    <property type="match status" value="1"/>
</dbReference>
<dbReference type="HAMAP" id="MF_00241">
    <property type="entry name" value="Ogg"/>
    <property type="match status" value="1"/>
</dbReference>
<dbReference type="InterPro" id="IPR012092">
    <property type="entry name" value="DNA_glyclase/AP_lyase_Ogg"/>
</dbReference>
<dbReference type="InterPro" id="IPR011257">
    <property type="entry name" value="DNA_glycosylase"/>
</dbReference>
<dbReference type="InterPro" id="IPR003265">
    <property type="entry name" value="HhH-GPD_domain"/>
</dbReference>
<dbReference type="InterPro" id="IPR023170">
    <property type="entry name" value="HhH_base_excis_C"/>
</dbReference>
<dbReference type="NCBIfam" id="NF002305">
    <property type="entry name" value="PRK01229.1"/>
    <property type="match status" value="1"/>
</dbReference>
<dbReference type="Pfam" id="PF22175">
    <property type="entry name" value="Ogg-HhH"/>
    <property type="match status" value="1"/>
</dbReference>
<dbReference type="PIRSF" id="PIRSF005954">
    <property type="entry name" value="Thrmst_ogg"/>
    <property type="match status" value="1"/>
</dbReference>
<dbReference type="SMART" id="SM00478">
    <property type="entry name" value="ENDO3c"/>
    <property type="match status" value="1"/>
</dbReference>
<dbReference type="SUPFAM" id="SSF48150">
    <property type="entry name" value="DNA-glycosylase"/>
    <property type="match status" value="1"/>
</dbReference>
<keyword id="KW-0227">DNA damage</keyword>
<keyword id="KW-0234">DNA repair</keyword>
<keyword id="KW-0326">Glycosidase</keyword>
<keyword id="KW-0378">Hydrolase</keyword>
<keyword id="KW-0456">Lyase</keyword>
<keyword id="KW-0511">Multifunctional enzyme</keyword>
<feature type="chain" id="PRO_0000159564" description="8-oxoguanine DNA glycosylase/AP lyase">
    <location>
        <begin position="1"/>
        <end position="209"/>
    </location>
</feature>
<feature type="active site" evidence="1">
    <location>
        <position position="132"/>
    </location>
</feature>
<feature type="active site" evidence="1">
    <location>
        <position position="150"/>
    </location>
</feature>
<feature type="site" description="Important for guanine/8-oxoguanine distinction" evidence="1">
    <location>
        <position position="209"/>
    </location>
</feature>
<protein>
    <recommendedName>
        <fullName evidence="1">8-oxoguanine DNA glycosylase/AP lyase</fullName>
    </recommendedName>
    <domain>
        <recommendedName>
            <fullName evidence="1">8-oxoguanine DNA glycosylase</fullName>
            <shortName evidence="1">8-oxoG DNA glycosylase</shortName>
            <ecNumber evidence="1">3.2.2.-</ecNumber>
        </recommendedName>
    </domain>
    <domain>
        <recommendedName>
            <fullName evidence="1">DNA-(apurinic or apyrimidinic site) lyase</fullName>
            <shortName evidence="1">AP lyase</shortName>
            <ecNumber evidence="1">4.2.99.18</ecNumber>
        </recommendedName>
    </domain>
</protein>
<gene>
    <name evidence="1" type="primary">ogg</name>
    <name type="ordered locus">PTO0481</name>
</gene>
<sequence>MISSDYIKDKILEIENIQGNLIRSRISEFKRLKKSDKYTLFKELSFCILTANTSAELGLKCQAYINDGFYRLDYNDLREELIKVHYRFYNKRASYIIGARDIIDDLEYIVNMDDHFRAREILIERVKGIGYKEASHFLRNVGVFDFAILDKHIIKFMKNNYYIKYENNSSRRRYLENEIVFNELAKKFNMEPGVFDLYIWYIETGKILK</sequence>
<reference key="1">
    <citation type="journal article" date="2004" name="Proc. Natl. Acad. Sci. U.S.A.">
        <title>Genome sequence of Picrophilus torridus and its implications for life around pH 0.</title>
        <authorList>
            <person name="Fuetterer O."/>
            <person name="Angelov A."/>
            <person name="Liesegang H."/>
            <person name="Gottschalk G."/>
            <person name="Schleper C."/>
            <person name="Schepers B."/>
            <person name="Dock C."/>
            <person name="Antranikian G."/>
            <person name="Liebl W."/>
        </authorList>
    </citation>
    <scope>NUCLEOTIDE SEQUENCE [LARGE SCALE GENOMIC DNA]</scope>
    <source>
        <strain>ATCC 700027 / DSM 9790 / JCM 10055 / NBRC 100828 / KAW 2/3</strain>
    </source>
</reference>